<reference key="1">
    <citation type="submission" date="2006-08" db="EMBL/GenBank/DDBJ databases">
        <authorList>
            <person name="Liu G.Y."/>
        </authorList>
    </citation>
    <scope>NUCLEOTIDE SEQUENCE [LARGE SCALE MRNA]</scope>
</reference>
<proteinExistence type="evidence at transcript level"/>
<accession>Q06AT9</accession>
<organism>
    <name type="scientific">Sus scrofa</name>
    <name type="common">Pig</name>
    <dbReference type="NCBI Taxonomy" id="9823"/>
    <lineage>
        <taxon>Eukaryota</taxon>
        <taxon>Metazoa</taxon>
        <taxon>Chordata</taxon>
        <taxon>Craniata</taxon>
        <taxon>Vertebrata</taxon>
        <taxon>Euteleostomi</taxon>
        <taxon>Mammalia</taxon>
        <taxon>Eutheria</taxon>
        <taxon>Laurasiatheria</taxon>
        <taxon>Artiodactyla</taxon>
        <taxon>Suina</taxon>
        <taxon>Suidae</taxon>
        <taxon>Sus</taxon>
    </lineage>
</organism>
<gene>
    <name type="primary">RBM4B</name>
    <name type="synonym">RBM30</name>
</gene>
<name>RBM4B_PIG</name>
<dbReference type="EMBL" id="DQ917636">
    <property type="protein sequence ID" value="ABI97181.1"/>
    <property type="molecule type" value="mRNA"/>
</dbReference>
<dbReference type="RefSeq" id="NP_001116660.1">
    <property type="nucleotide sequence ID" value="NM_001123188.1"/>
</dbReference>
<dbReference type="RefSeq" id="XP_020932489.1">
    <property type="nucleotide sequence ID" value="XM_021076830.1"/>
</dbReference>
<dbReference type="RefSeq" id="XP_020932495.1">
    <property type="nucleotide sequence ID" value="XM_021076836.1"/>
</dbReference>
<dbReference type="SMR" id="Q06AT9"/>
<dbReference type="FunCoup" id="Q06AT9">
    <property type="interactions" value="2209"/>
</dbReference>
<dbReference type="STRING" id="9823.ENSSSCP00000043449"/>
<dbReference type="GlyGen" id="Q06AT9">
    <property type="glycosylation" value="1 site"/>
</dbReference>
<dbReference type="PaxDb" id="9823-ENSSSCP00000013750"/>
<dbReference type="PeptideAtlas" id="Q06AT9"/>
<dbReference type="Ensembl" id="ENSSSCT00000014136.5">
    <property type="protein sequence ID" value="ENSSSCP00000013750.3"/>
    <property type="gene ID" value="ENSSSCG00000038304.3"/>
</dbReference>
<dbReference type="Ensembl" id="ENSSSCT00015039007.1">
    <property type="protein sequence ID" value="ENSSSCP00015015513.1"/>
    <property type="gene ID" value="ENSSSCG00015029362.1"/>
</dbReference>
<dbReference type="Ensembl" id="ENSSSCT00025105858.1">
    <property type="protein sequence ID" value="ENSSSCP00025047387.1"/>
    <property type="gene ID" value="ENSSSCG00025076440.1"/>
</dbReference>
<dbReference type="Ensembl" id="ENSSSCT00030011204.1">
    <property type="protein sequence ID" value="ENSSSCP00030004985.1"/>
    <property type="gene ID" value="ENSSSCG00030008238.1"/>
</dbReference>
<dbReference type="Ensembl" id="ENSSSCT00050016466.1">
    <property type="protein sequence ID" value="ENSSSCP00050006764.1"/>
    <property type="gene ID" value="ENSSSCG00050012196.1"/>
</dbReference>
<dbReference type="Ensembl" id="ENSSSCT00105078706">
    <property type="protein sequence ID" value="ENSSSCP00105055752"/>
    <property type="gene ID" value="ENSSSCG00105041257"/>
</dbReference>
<dbReference type="Ensembl" id="ENSSSCT00110060250">
    <property type="protein sequence ID" value="ENSSSCP00110042119"/>
    <property type="gene ID" value="ENSSSCG00110031532"/>
</dbReference>
<dbReference type="Ensembl" id="ENSSSCT00115038653">
    <property type="protein sequence ID" value="ENSSSCP00115036466"/>
    <property type="gene ID" value="ENSSSCG00115021824"/>
</dbReference>
<dbReference type="GeneID" id="100144418"/>
<dbReference type="KEGG" id="ssc:100144418"/>
<dbReference type="CTD" id="83759"/>
<dbReference type="eggNOG" id="KOG0109">
    <property type="taxonomic scope" value="Eukaryota"/>
</dbReference>
<dbReference type="GeneTree" id="ENSGT00940000163468"/>
<dbReference type="InParanoid" id="Q06AT9"/>
<dbReference type="OMA" id="QMGTVKS"/>
<dbReference type="OrthoDB" id="79941at2759"/>
<dbReference type="ChiTaRS" id="RBM4B">
    <property type="organism name" value="pig"/>
</dbReference>
<dbReference type="Proteomes" id="UP000008227">
    <property type="component" value="Chromosome 2"/>
</dbReference>
<dbReference type="Proteomes" id="UP000314985">
    <property type="component" value="Unplaced"/>
</dbReference>
<dbReference type="Proteomes" id="UP000694570">
    <property type="component" value="Unplaced"/>
</dbReference>
<dbReference type="Proteomes" id="UP000694571">
    <property type="component" value="Unplaced"/>
</dbReference>
<dbReference type="Proteomes" id="UP000694720">
    <property type="component" value="Unplaced"/>
</dbReference>
<dbReference type="Proteomes" id="UP000694722">
    <property type="component" value="Unplaced"/>
</dbReference>
<dbReference type="Proteomes" id="UP000694723">
    <property type="component" value="Unplaced"/>
</dbReference>
<dbReference type="Proteomes" id="UP000694724">
    <property type="component" value="Unplaced"/>
</dbReference>
<dbReference type="Proteomes" id="UP000694725">
    <property type="component" value="Unplaced"/>
</dbReference>
<dbReference type="Proteomes" id="UP000694726">
    <property type="component" value="Unplaced"/>
</dbReference>
<dbReference type="Proteomes" id="UP000694727">
    <property type="component" value="Unplaced"/>
</dbReference>
<dbReference type="Proteomes" id="UP000694728">
    <property type="component" value="Unplaced"/>
</dbReference>
<dbReference type="Bgee" id="ENSSSCG00000038304">
    <property type="expression patterns" value="Expressed in testis and 44 other cell types or tissues"/>
</dbReference>
<dbReference type="ExpressionAtlas" id="Q06AT9">
    <property type="expression patterns" value="baseline and differential"/>
</dbReference>
<dbReference type="GO" id="GO:0016607">
    <property type="term" value="C:nuclear speck"/>
    <property type="evidence" value="ECO:0000318"/>
    <property type="project" value="GO_Central"/>
</dbReference>
<dbReference type="GO" id="GO:0005730">
    <property type="term" value="C:nucleolus"/>
    <property type="evidence" value="ECO:0007669"/>
    <property type="project" value="UniProtKB-SubCell"/>
</dbReference>
<dbReference type="GO" id="GO:0003723">
    <property type="term" value="F:RNA binding"/>
    <property type="evidence" value="ECO:0000318"/>
    <property type="project" value="GO_Central"/>
</dbReference>
<dbReference type="GO" id="GO:0008270">
    <property type="term" value="F:zinc ion binding"/>
    <property type="evidence" value="ECO:0007669"/>
    <property type="project" value="UniProtKB-KW"/>
</dbReference>
<dbReference type="GO" id="GO:0032922">
    <property type="term" value="P:circadian regulation of gene expression"/>
    <property type="evidence" value="ECO:0000250"/>
    <property type="project" value="UniProtKB"/>
</dbReference>
<dbReference type="GO" id="GO:0007623">
    <property type="term" value="P:circadian rhythm"/>
    <property type="evidence" value="ECO:0000250"/>
    <property type="project" value="UniProtKB"/>
</dbReference>
<dbReference type="GO" id="GO:0043153">
    <property type="term" value="P:entrainment of circadian clock by photoperiod"/>
    <property type="evidence" value="ECO:0000250"/>
    <property type="project" value="UniProtKB"/>
</dbReference>
<dbReference type="GO" id="GO:0006397">
    <property type="term" value="P:mRNA processing"/>
    <property type="evidence" value="ECO:0007669"/>
    <property type="project" value="UniProtKB-KW"/>
</dbReference>
<dbReference type="GO" id="GO:0006417">
    <property type="term" value="P:regulation of translation"/>
    <property type="evidence" value="ECO:0000250"/>
    <property type="project" value="UniProtKB"/>
</dbReference>
<dbReference type="GO" id="GO:0008380">
    <property type="term" value="P:RNA splicing"/>
    <property type="evidence" value="ECO:0007669"/>
    <property type="project" value="UniProtKB-KW"/>
</dbReference>
<dbReference type="CDD" id="cd12606">
    <property type="entry name" value="RRM1_RBM4"/>
    <property type="match status" value="1"/>
</dbReference>
<dbReference type="CDD" id="cd12607">
    <property type="entry name" value="RRM2_RBM4"/>
    <property type="match status" value="1"/>
</dbReference>
<dbReference type="FunFam" id="3.30.70.330:FF:000058">
    <property type="entry name" value="RNA-binding motif protein 4"/>
    <property type="match status" value="1"/>
</dbReference>
<dbReference type="FunFam" id="3.30.70.330:FF:000085">
    <property type="entry name" value="RNA-binding protein 4 isoform X1"/>
    <property type="match status" value="1"/>
</dbReference>
<dbReference type="FunFam" id="4.10.60.10:FF:000015">
    <property type="entry name" value="RNA-binding protein 4B isoform X1"/>
    <property type="match status" value="1"/>
</dbReference>
<dbReference type="Gene3D" id="3.30.70.330">
    <property type="match status" value="2"/>
</dbReference>
<dbReference type="Gene3D" id="4.10.60.10">
    <property type="entry name" value="Zinc finger, CCHC-type"/>
    <property type="match status" value="1"/>
</dbReference>
<dbReference type="InterPro" id="IPR050502">
    <property type="entry name" value="Euk_RNA-bind_prot"/>
</dbReference>
<dbReference type="InterPro" id="IPR012677">
    <property type="entry name" value="Nucleotide-bd_a/b_plait_sf"/>
</dbReference>
<dbReference type="InterPro" id="IPR035979">
    <property type="entry name" value="RBD_domain_sf"/>
</dbReference>
<dbReference type="InterPro" id="IPR034897">
    <property type="entry name" value="RBM4_RRM1"/>
</dbReference>
<dbReference type="InterPro" id="IPR034898">
    <property type="entry name" value="RBM4_RRM2"/>
</dbReference>
<dbReference type="InterPro" id="IPR000504">
    <property type="entry name" value="RRM_dom"/>
</dbReference>
<dbReference type="InterPro" id="IPR001878">
    <property type="entry name" value="Znf_CCHC"/>
</dbReference>
<dbReference type="PANTHER" id="PTHR48025:SF26">
    <property type="entry name" value="HETEROGENEOUS NUCLEAR RIBONUCLEOPROTEIN M-RELATED"/>
    <property type="match status" value="1"/>
</dbReference>
<dbReference type="PANTHER" id="PTHR48025">
    <property type="entry name" value="OS02G0815200 PROTEIN"/>
    <property type="match status" value="1"/>
</dbReference>
<dbReference type="Pfam" id="PF00076">
    <property type="entry name" value="RRM_1"/>
    <property type="match status" value="2"/>
</dbReference>
<dbReference type="Pfam" id="PF00098">
    <property type="entry name" value="zf-CCHC"/>
    <property type="match status" value="1"/>
</dbReference>
<dbReference type="SMART" id="SM00360">
    <property type="entry name" value="RRM"/>
    <property type="match status" value="2"/>
</dbReference>
<dbReference type="SMART" id="SM00343">
    <property type="entry name" value="ZnF_C2HC"/>
    <property type="match status" value="1"/>
</dbReference>
<dbReference type="SUPFAM" id="SSF54928">
    <property type="entry name" value="RNA-binding domain, RBD"/>
    <property type="match status" value="2"/>
</dbReference>
<dbReference type="PROSITE" id="PS50102">
    <property type="entry name" value="RRM"/>
    <property type="match status" value="2"/>
</dbReference>
<dbReference type="PROSITE" id="PS50158">
    <property type="entry name" value="ZF_CCHC"/>
    <property type="match status" value="1"/>
</dbReference>
<comment type="function">
    <text evidence="1">Required for the translational activation of PER1 mRNA in response to circadian clock. Binds directly to the 3'-UTR of the PER1 mRNA (By similarity).</text>
</comment>
<comment type="subunit">
    <text evidence="1">Interacts with TNPO3, which may mediate nuclear import of the protein.</text>
</comment>
<comment type="subcellular location">
    <subcellularLocation>
        <location evidence="1">Nucleus</location>
        <location evidence="1">Nucleolus</location>
    </subcellularLocation>
</comment>
<evidence type="ECO:0000250" key="1"/>
<evidence type="ECO:0000255" key="2">
    <source>
        <dbReference type="PROSITE-ProRule" id="PRU00047"/>
    </source>
</evidence>
<evidence type="ECO:0000255" key="3">
    <source>
        <dbReference type="PROSITE-ProRule" id="PRU00176"/>
    </source>
</evidence>
<protein>
    <recommendedName>
        <fullName>RNA-binding protein 4B</fullName>
    </recommendedName>
    <alternativeName>
        <fullName>RNA-binding motif protein 30</fullName>
    </alternativeName>
    <alternativeName>
        <fullName>RNA-binding motif protein 4B</fullName>
    </alternativeName>
    <alternativeName>
        <fullName>RNA-binding protein 30</fullName>
    </alternativeName>
</protein>
<feature type="chain" id="PRO_0000289661" description="RNA-binding protein 4B">
    <location>
        <begin position="1"/>
        <end position="359"/>
    </location>
</feature>
<feature type="domain" description="RRM 1" evidence="3">
    <location>
        <begin position="2"/>
        <end position="72"/>
    </location>
</feature>
<feature type="domain" description="RRM 2" evidence="3">
    <location>
        <begin position="78"/>
        <end position="148"/>
    </location>
</feature>
<feature type="zinc finger region" description="CCHC-type" evidence="2">
    <location>
        <begin position="160"/>
        <end position="177"/>
    </location>
</feature>
<feature type="region of interest" description="Interaction with TNPO3" evidence="1">
    <location>
        <begin position="196"/>
        <end position="359"/>
    </location>
</feature>
<sequence>MVKLFIGNLPREATEQEIRSLFEQYGKVLECDIIKNYGFVHIEDKTAAEDAIRNLHHYKLHGVNINVEASKNKSKASTKLHVGNISPTCTNQELRAKFEEYGPVIECDIVKDYAFVHMERAEDAVEAIRGLDNTEFQGKRMHVQLSTSRLRTAPGMGDQSGCYRCGKEGHWSKECPVDRTGRVADFTEQYNEQYGAVRPPYTMGYGESMYYNDAYGALDYYKRYRVRSYEAVAAAAAASAYNYAEQTMSHLPQVQSTAVTSHLNSTSVDPYDRHLLPNSGAAATSAAMAAAAATTSSYYGRDRSPLRRAAAVLPTVGEGYGYGPESELSQASAAARNSLYDMARYEREQYVDRARYSAF</sequence>
<keyword id="KW-0010">Activator</keyword>
<keyword id="KW-0479">Metal-binding</keyword>
<keyword id="KW-0507">mRNA processing</keyword>
<keyword id="KW-0508">mRNA splicing</keyword>
<keyword id="KW-0539">Nucleus</keyword>
<keyword id="KW-1185">Reference proteome</keyword>
<keyword id="KW-0677">Repeat</keyword>
<keyword id="KW-0694">RNA-binding</keyword>
<keyword id="KW-0862">Zinc</keyword>
<keyword id="KW-0863">Zinc-finger</keyword>